<accession>Q7S2C2</accession>
<feature type="chain" id="PRO_0000458576" description="Small ribosomal subunit protein uS13m">
    <location>
        <begin position="1"/>
        <end position="119"/>
    </location>
</feature>
<dbReference type="EMBL" id="CM002240">
    <property type="protein sequence ID" value="EAA29522.1"/>
    <property type="molecule type" value="Genomic_DNA"/>
</dbReference>
<dbReference type="RefSeq" id="XP_958758.1">
    <property type="nucleotide sequence ID" value="XM_953665.2"/>
</dbReference>
<dbReference type="PDB" id="6YW5">
    <property type="method" value="EM"/>
    <property type="resolution" value="2.85 A"/>
    <property type="chains" value="MM=1-119"/>
</dbReference>
<dbReference type="PDB" id="6YWX">
    <property type="method" value="EM"/>
    <property type="resolution" value="3.10 A"/>
    <property type="chains" value="MM=1-119"/>
</dbReference>
<dbReference type="PDBsum" id="6YW5"/>
<dbReference type="PDBsum" id="6YWX"/>
<dbReference type="EMDB" id="EMD-10958"/>
<dbReference type="EMDB" id="EMD-10978"/>
<dbReference type="SMR" id="Q7S2C2"/>
<dbReference type="FunCoup" id="Q7S2C2">
    <property type="interactions" value="324"/>
</dbReference>
<dbReference type="STRING" id="367110.Q7S2C2"/>
<dbReference type="PaxDb" id="5141-EFNCRP00000007542"/>
<dbReference type="EnsemblFungi" id="EAA29522">
    <property type="protein sequence ID" value="EAA29522"/>
    <property type="gene ID" value="NCU09539"/>
</dbReference>
<dbReference type="GeneID" id="3874905"/>
<dbReference type="KEGG" id="ncr:NCU09539"/>
<dbReference type="VEuPathDB" id="FungiDB:NCU09539"/>
<dbReference type="HOGENOM" id="CLU_103849_2_4_1"/>
<dbReference type="InParanoid" id="Q7S2C2"/>
<dbReference type="OMA" id="MNVKRLM"/>
<dbReference type="OrthoDB" id="525520at2759"/>
<dbReference type="Proteomes" id="UP000001805">
    <property type="component" value="Chromosome 2, Linkage Group V"/>
</dbReference>
<dbReference type="GO" id="GO:0005763">
    <property type="term" value="C:mitochondrial small ribosomal subunit"/>
    <property type="evidence" value="ECO:0007669"/>
    <property type="project" value="EnsemblFungi"/>
</dbReference>
<dbReference type="GO" id="GO:0005739">
    <property type="term" value="C:mitochondrion"/>
    <property type="evidence" value="ECO:0000318"/>
    <property type="project" value="GO_Central"/>
</dbReference>
<dbReference type="GO" id="GO:0005777">
    <property type="term" value="C:peroxisome"/>
    <property type="evidence" value="ECO:0007669"/>
    <property type="project" value="EnsemblFungi"/>
</dbReference>
<dbReference type="GO" id="GO:0015935">
    <property type="term" value="C:small ribosomal subunit"/>
    <property type="evidence" value="ECO:0000318"/>
    <property type="project" value="GO_Central"/>
</dbReference>
<dbReference type="GO" id="GO:0003723">
    <property type="term" value="F:RNA binding"/>
    <property type="evidence" value="ECO:0007669"/>
    <property type="project" value="InterPro"/>
</dbReference>
<dbReference type="GO" id="GO:0003735">
    <property type="term" value="F:structural constituent of ribosome"/>
    <property type="evidence" value="ECO:0007669"/>
    <property type="project" value="EnsemblFungi"/>
</dbReference>
<dbReference type="GO" id="GO:0006412">
    <property type="term" value="P:translation"/>
    <property type="evidence" value="ECO:0007669"/>
    <property type="project" value="InterPro"/>
</dbReference>
<dbReference type="FunFam" id="1.10.8.50:FF:000015">
    <property type="entry name" value="30S ribosomal protein-like protein S13"/>
    <property type="match status" value="1"/>
</dbReference>
<dbReference type="FunFam" id="4.10.910.10:FF:000004">
    <property type="entry name" value="Small subunit ribosomal protein S13"/>
    <property type="match status" value="1"/>
</dbReference>
<dbReference type="Gene3D" id="1.10.8.50">
    <property type="match status" value="1"/>
</dbReference>
<dbReference type="Gene3D" id="4.10.910.10">
    <property type="entry name" value="30s ribosomal protein s13, domain 2"/>
    <property type="match status" value="1"/>
</dbReference>
<dbReference type="InterPro" id="IPR027437">
    <property type="entry name" value="Rbsml_uS13_C"/>
</dbReference>
<dbReference type="InterPro" id="IPR001892">
    <property type="entry name" value="Ribosomal_uS13"/>
</dbReference>
<dbReference type="InterPro" id="IPR010979">
    <property type="entry name" value="Ribosomal_uS13-like_H2TH"/>
</dbReference>
<dbReference type="InterPro" id="IPR018269">
    <property type="entry name" value="Ribosomal_uS13_CS"/>
</dbReference>
<dbReference type="PANTHER" id="PTHR10871">
    <property type="entry name" value="30S RIBOSOMAL PROTEIN S13/40S RIBOSOMAL PROTEIN S18"/>
    <property type="match status" value="1"/>
</dbReference>
<dbReference type="PANTHER" id="PTHR10871:SF1">
    <property type="entry name" value="SMALL RIBOSOMAL SUBUNIT PROTEIN US13M"/>
    <property type="match status" value="1"/>
</dbReference>
<dbReference type="Pfam" id="PF00416">
    <property type="entry name" value="Ribosomal_S13"/>
    <property type="match status" value="1"/>
</dbReference>
<dbReference type="PIRSF" id="PIRSF002134">
    <property type="entry name" value="Ribosomal_S13"/>
    <property type="match status" value="1"/>
</dbReference>
<dbReference type="SUPFAM" id="SSF46946">
    <property type="entry name" value="S13-like H2TH domain"/>
    <property type="match status" value="1"/>
</dbReference>
<dbReference type="PROSITE" id="PS00646">
    <property type="entry name" value="RIBOSOMAL_S13_1"/>
    <property type="match status" value="1"/>
</dbReference>
<dbReference type="PROSITE" id="PS50159">
    <property type="entry name" value="RIBOSOMAL_S13_2"/>
    <property type="match status" value="1"/>
</dbReference>
<organism>
    <name type="scientific">Neurospora crassa (strain ATCC 24698 / 74-OR23-1A / CBS 708.71 / DSM 1257 / FGSC 987)</name>
    <dbReference type="NCBI Taxonomy" id="367110"/>
    <lineage>
        <taxon>Eukaryota</taxon>
        <taxon>Fungi</taxon>
        <taxon>Dikarya</taxon>
        <taxon>Ascomycota</taxon>
        <taxon>Pezizomycotina</taxon>
        <taxon>Sordariomycetes</taxon>
        <taxon>Sordariomycetidae</taxon>
        <taxon>Sordariales</taxon>
        <taxon>Sordariaceae</taxon>
        <taxon>Neurospora</taxon>
    </lineage>
</organism>
<protein>
    <recommendedName>
        <fullName evidence="2">Small ribosomal subunit protein uS13m</fullName>
    </recommendedName>
</protein>
<reference key="1">
    <citation type="journal article" date="2003" name="Nature">
        <title>The genome sequence of the filamentous fungus Neurospora crassa.</title>
        <authorList>
            <person name="Galagan J.E."/>
            <person name="Calvo S.E."/>
            <person name="Borkovich K.A."/>
            <person name="Selker E.U."/>
            <person name="Read N.D."/>
            <person name="Jaffe D.B."/>
            <person name="FitzHugh W."/>
            <person name="Ma L.-J."/>
            <person name="Smirnov S."/>
            <person name="Purcell S."/>
            <person name="Rehman B."/>
            <person name="Elkins T."/>
            <person name="Engels R."/>
            <person name="Wang S."/>
            <person name="Nielsen C.B."/>
            <person name="Butler J."/>
            <person name="Endrizzi M."/>
            <person name="Qui D."/>
            <person name="Ianakiev P."/>
            <person name="Bell-Pedersen D."/>
            <person name="Nelson M.A."/>
            <person name="Werner-Washburne M."/>
            <person name="Selitrennikoff C.P."/>
            <person name="Kinsey J.A."/>
            <person name="Braun E.L."/>
            <person name="Zelter A."/>
            <person name="Schulte U."/>
            <person name="Kothe G.O."/>
            <person name="Jedd G."/>
            <person name="Mewes H.-W."/>
            <person name="Staben C."/>
            <person name="Marcotte E."/>
            <person name="Greenberg D."/>
            <person name="Roy A."/>
            <person name="Foley K."/>
            <person name="Naylor J."/>
            <person name="Stange-Thomann N."/>
            <person name="Barrett R."/>
            <person name="Gnerre S."/>
            <person name="Kamal M."/>
            <person name="Kamvysselis M."/>
            <person name="Mauceli E.W."/>
            <person name="Bielke C."/>
            <person name="Rudd S."/>
            <person name="Frishman D."/>
            <person name="Krystofova S."/>
            <person name="Rasmussen C."/>
            <person name="Metzenberg R.L."/>
            <person name="Perkins D.D."/>
            <person name="Kroken S."/>
            <person name="Cogoni C."/>
            <person name="Macino G."/>
            <person name="Catcheside D.E.A."/>
            <person name="Li W."/>
            <person name="Pratt R.J."/>
            <person name="Osmani S.A."/>
            <person name="DeSouza C.P.C."/>
            <person name="Glass N.L."/>
            <person name="Orbach M.J."/>
            <person name="Berglund J.A."/>
            <person name="Voelker R."/>
            <person name="Yarden O."/>
            <person name="Plamann M."/>
            <person name="Seiler S."/>
            <person name="Dunlap J.C."/>
            <person name="Radford A."/>
            <person name="Aramayo R."/>
            <person name="Natvig D.O."/>
            <person name="Alex L.A."/>
            <person name="Mannhaupt G."/>
            <person name="Ebbole D.J."/>
            <person name="Freitag M."/>
            <person name="Paulsen I."/>
            <person name="Sachs M.S."/>
            <person name="Lander E.S."/>
            <person name="Nusbaum C."/>
            <person name="Birren B.W."/>
        </authorList>
    </citation>
    <scope>NUCLEOTIDE SEQUENCE [LARGE SCALE GENOMIC DNA]</scope>
    <source>
        <strain>ATCC 24698 / 74-OR23-1A / CBS 708.71 / DSM 1257 / FGSC 987</strain>
    </source>
</reference>
<reference evidence="5 6" key="2">
    <citation type="journal article" date="2020" name="Nat. Commun.">
        <title>Analysis of translating mitoribosome reveals functional characteristics of translation in mitochondria of fungi.</title>
        <authorList>
            <person name="Itoh Y."/>
            <person name="Naschberger A."/>
            <person name="Mortezaei N."/>
            <person name="Herrmann J.M."/>
            <person name="Amunts A."/>
        </authorList>
    </citation>
    <scope>STRUCTURE BY ELECTRON MICROSCOPY (2.85 ANGSTROMS)</scope>
</reference>
<name>SWS2_NEUCR</name>
<gene>
    <name type="primary">sws2</name>
    <name type="ORF">NCU09539</name>
</gene>
<sequence>MVFILGVNFNEHKLVQKALESFYGLGQQASARILAKYSIHPRAKMGTLPPKIVTALTAELSTMTIENDARRLVLDNIKRLRDMGTYRGRRHAMGLPVRGQQTRNQIANARKLNKIERHG</sequence>
<comment type="function">
    <text evidence="4">Component of the mitochondrial ribosome (mitoribosome), a dedicated translation machinery responsible for the synthesis of mitochondrial genome-encoded proteins, including at least some of the essential transmembrane subunits of the mitochondrial respiratory chain. The mitoribosomes are attached to the mitochondrial inner membrane and translation products are cotranslationally integrated into the membrane.</text>
</comment>
<comment type="subunit">
    <text evidence="1">Component of the mitochondrial small ribosomal subunit (mt-SSU). Mature N.crassa 74S mitochondrial ribosomes consist of a small (37S) and a large (54S) subunit. The 37S small subunit contains a 16S ribosomal RNA (16S mt-rRNA) and 32 different proteins. The 54S large subunit contains a 23S rRNA (23S mt-rRNA) and 42 different proteins.</text>
</comment>
<comment type="subcellular location">
    <subcellularLocation>
        <location evidence="1">Mitochondrion</location>
    </subcellularLocation>
</comment>
<comment type="similarity">
    <text evidence="3">Belongs to the universal ribosomal protein uS13 family.</text>
</comment>
<evidence type="ECO:0000269" key="1">
    <source>
    </source>
</evidence>
<evidence type="ECO:0000303" key="2">
    <source>
    </source>
</evidence>
<evidence type="ECO:0000305" key="3"/>
<evidence type="ECO:0000305" key="4">
    <source>
    </source>
</evidence>
<evidence type="ECO:0007744" key="5">
    <source>
        <dbReference type="PDB" id="6YW5"/>
    </source>
</evidence>
<evidence type="ECO:0007744" key="6">
    <source>
        <dbReference type="PDB" id="6YWX"/>
    </source>
</evidence>
<keyword id="KW-0002">3D-structure</keyword>
<keyword id="KW-0496">Mitochondrion</keyword>
<keyword id="KW-1185">Reference proteome</keyword>
<keyword id="KW-0687">Ribonucleoprotein</keyword>
<keyword id="KW-0689">Ribosomal protein</keyword>
<proteinExistence type="evidence at protein level"/>